<name>MELK_CAEEL</name>
<gene>
    <name evidence="16" type="primary">pig-1</name>
    <name evidence="16" type="ORF">W03G1.6</name>
</gene>
<proteinExistence type="evidence at protein level"/>
<reference evidence="13" key="1">
    <citation type="journal article" date="1998" name="Science">
        <title>Genome sequence of the nematode C. elegans: a platform for investigating biology.</title>
        <authorList>
            <consortium name="The C. elegans sequencing consortium"/>
        </authorList>
    </citation>
    <scope>NUCLEOTIDE SEQUENCE [LARGE SCALE GENOMIC DNA]</scope>
    <source>
        <strain evidence="13">Bristol N2</strain>
    </source>
</reference>
<reference evidence="12" key="2">
    <citation type="journal article" date="2006" name="Development">
        <title>The C. elegans MELK ortholog PIG-1 regulates cell size asymmetry and daughter cell fate in asymmetric neuroblast divisions.</title>
        <authorList>
            <person name="Cordes S."/>
            <person name="Frank C.A."/>
            <person name="Garriga G."/>
        </authorList>
    </citation>
    <scope>FUNCTION</scope>
    <scope>SUBCELLULAR LOCATION</scope>
    <scope>DEVELOPMENTAL STAGE</scope>
    <scope>DISRUPTION PHENOTYPE</scope>
    <scope>MUTAGENESIS OF GLY-172 AND GLY-198</scope>
</reference>
<reference evidence="12" key="3">
    <citation type="journal article" date="2010" name="Science">
        <title>Polarized myosin produces unequal-size daughters during asymmetric cell division.</title>
        <authorList>
            <person name="Ou G."/>
            <person name="Stuurman N."/>
            <person name="D'Ambrosio M."/>
            <person name="Vale R.D."/>
        </authorList>
    </citation>
    <scope>FUNCTION</scope>
    <scope>DISRUPTION PHENOTYPE</scope>
</reference>
<reference evidence="12" key="4">
    <citation type="journal article" date="2012" name="Nature">
        <title>Programmed elimination of cells by caspase-independent cell extrusion in C. elegans.</title>
        <authorList>
            <person name="Denning D.P."/>
            <person name="Hatch V."/>
            <person name="Horvitz H.R."/>
        </authorList>
    </citation>
    <scope>FUNCTION</scope>
    <scope>DISRUPTION PHENOTYPE</scope>
    <scope>MUTAGENESIS OF THR-169</scope>
</reference>
<reference evidence="12" key="5">
    <citation type="journal article" date="2013" name="Development">
        <title>Developmental stage-dependent transcriptional regulatory pathways control neuroblast lineage progression.</title>
        <authorList>
            <person name="Feng G."/>
            <person name="Yi P."/>
            <person name="Yang Y."/>
            <person name="Chai Y."/>
            <person name="Tian D."/>
            <person name="Zhu Z."/>
            <person name="Liu J."/>
            <person name="Zhou F."/>
            <person name="Cheng Z."/>
            <person name="Wang X."/>
            <person name="Li W."/>
            <person name="Ou G."/>
        </authorList>
    </citation>
    <scope>FUNCTION</scope>
</reference>
<reference evidence="12" key="6">
    <citation type="journal article" date="2013" name="Genetics">
        <title>Caenorhabditis elegans PIG-1/MELK acts in a conserved PAR-4/LKB1 polarity pathway to promote asymmetric neuroblast divisions.</title>
        <authorList>
            <person name="Chien S.C."/>
            <person name="Brinkmann E.M."/>
            <person name="Teuliere J."/>
            <person name="Garriga G."/>
        </authorList>
    </citation>
    <scope>FUNCTION</scope>
    <scope>SUBCELLULAR LOCATION</scope>
    <scope>DOMAIN</scope>
    <scope>MUTAGENESIS OF THR-169 AND GLY-198</scope>
</reference>
<reference evidence="12" key="7">
    <citation type="journal article" date="2013" name="Nature">
        <title>An Sp1 transcription factor coordinates caspase-dependent and -independent apoptotic pathways.</title>
        <authorList>
            <person name="Hirose T."/>
            <person name="Horvitz H.R."/>
        </authorList>
    </citation>
    <scope>FUNCTION</scope>
    <scope>MUTAGENESIS OF GLY-172</scope>
</reference>
<reference key="8">
    <citation type="journal article" date="2017" name="Sci. Rep.">
        <title>Comparative genetic, proteomic and phosphoproteomic analysis of C. elegans embryos with a focus on ham-1/STOX and pig-1/MELK in dopaminergic neuron development.</title>
        <authorList>
            <person name="Offenburger S.L."/>
            <person name="Bensaddek D."/>
            <person name="Murillo A.B."/>
            <person name="Lamond A.I."/>
            <person name="Gartner A."/>
        </authorList>
    </citation>
    <scope>FUNCTION</scope>
    <scope>DISRUPTION PHENOTYPE</scope>
</reference>
<evidence type="ECO:0000250" key="1">
    <source>
        <dbReference type="UniProtKB" id="Q14680"/>
    </source>
</evidence>
<evidence type="ECO:0000255" key="2">
    <source>
        <dbReference type="PROSITE-ProRule" id="PRU00159"/>
    </source>
</evidence>
<evidence type="ECO:0000255" key="3">
    <source>
        <dbReference type="PROSITE-ProRule" id="PRU00565"/>
    </source>
</evidence>
<evidence type="ECO:0000256" key="4">
    <source>
        <dbReference type="SAM" id="MobiDB-lite"/>
    </source>
</evidence>
<evidence type="ECO:0000269" key="5">
    <source>
    </source>
</evidence>
<evidence type="ECO:0000269" key="6">
    <source>
    </source>
</evidence>
<evidence type="ECO:0000269" key="7">
    <source>
    </source>
</evidence>
<evidence type="ECO:0000269" key="8">
    <source>
    </source>
</evidence>
<evidence type="ECO:0000269" key="9">
    <source>
    </source>
</evidence>
<evidence type="ECO:0000269" key="10">
    <source>
    </source>
</evidence>
<evidence type="ECO:0000269" key="11">
    <source>
    </source>
</evidence>
<evidence type="ECO:0000305" key="12"/>
<evidence type="ECO:0000312" key="13">
    <source>
        <dbReference type="Proteomes" id="UP000001940"/>
    </source>
</evidence>
<evidence type="ECO:0000312" key="14">
    <source>
        <dbReference type="WormBase" id="W03G1.6a"/>
    </source>
</evidence>
<evidence type="ECO:0000312" key="15">
    <source>
        <dbReference type="WormBase" id="W03G1.6b"/>
    </source>
</evidence>
<evidence type="ECO:0000312" key="16">
    <source>
        <dbReference type="WormBase" id="W03G1.6c"/>
    </source>
</evidence>
<evidence type="ECO:0000312" key="17">
    <source>
        <dbReference type="WormBase" id="W03G1.6d"/>
    </source>
</evidence>
<evidence type="ECO:0000312" key="18">
    <source>
        <dbReference type="WormBase" id="W03G1.6e"/>
    </source>
</evidence>
<evidence type="ECO:0000312" key="19">
    <source>
        <dbReference type="WormBase" id="W03G1.6f"/>
    </source>
</evidence>
<evidence type="ECO:0000312" key="20">
    <source>
        <dbReference type="WormBase" id="W03G1.6g"/>
    </source>
</evidence>
<evidence type="ECO:0000312" key="21">
    <source>
        <dbReference type="WormBase" id="W03G1.6h"/>
    </source>
</evidence>
<protein>
    <recommendedName>
        <fullName evidence="1">Maternal embryonic leucine zipper kinase</fullName>
        <shortName evidence="1">MELK</shortName>
        <ecNumber evidence="1">2.7.11.1</ecNumber>
    </recommendedName>
</protein>
<keyword id="KW-0025">Alternative splicing</keyword>
<keyword id="KW-0053">Apoptosis</keyword>
<keyword id="KW-0067">ATP-binding</keyword>
<keyword id="KW-0963">Cytoplasm</keyword>
<keyword id="KW-0206">Cytoskeleton</keyword>
<keyword id="KW-0217">Developmental protein</keyword>
<keyword id="KW-0418">Kinase</keyword>
<keyword id="KW-0524">Neurogenesis</keyword>
<keyword id="KW-0547">Nucleotide-binding</keyword>
<keyword id="KW-1185">Reference proteome</keyword>
<keyword id="KW-0723">Serine/threonine-protein kinase</keyword>
<keyword id="KW-0808">Transferase</keyword>
<dbReference type="EC" id="2.7.11.1" evidence="1"/>
<dbReference type="EMBL" id="FO081096">
    <property type="protein sequence ID" value="CCD69087.1"/>
    <property type="molecule type" value="Genomic_DNA"/>
</dbReference>
<dbReference type="EMBL" id="FO081096">
    <property type="protein sequence ID" value="CCD69088.1"/>
    <property type="molecule type" value="Genomic_DNA"/>
</dbReference>
<dbReference type="EMBL" id="FO081096">
    <property type="protein sequence ID" value="CDH93078.1"/>
    <property type="molecule type" value="Genomic_DNA"/>
</dbReference>
<dbReference type="EMBL" id="FO081096">
    <property type="protein sequence ID" value="CDH93079.1"/>
    <property type="molecule type" value="Genomic_DNA"/>
</dbReference>
<dbReference type="EMBL" id="FO081096">
    <property type="protein sequence ID" value="CDH93080.1"/>
    <property type="molecule type" value="Genomic_DNA"/>
</dbReference>
<dbReference type="EMBL" id="FO081096">
    <property type="protein sequence ID" value="CDH93081.1"/>
    <property type="molecule type" value="Genomic_DNA"/>
</dbReference>
<dbReference type="EMBL" id="FO081096">
    <property type="protein sequence ID" value="CDH93082.1"/>
    <property type="molecule type" value="Genomic_DNA"/>
</dbReference>
<dbReference type="EMBL" id="FO081096">
    <property type="protein sequence ID" value="CDH93083.1"/>
    <property type="molecule type" value="Genomic_DNA"/>
</dbReference>
<dbReference type="RefSeq" id="NP_001023420.2">
    <molecule id="U4PR86-2"/>
    <property type="nucleotide sequence ID" value="NM_001028249.6"/>
</dbReference>
<dbReference type="RefSeq" id="NP_001023421.2">
    <molecule id="U4PR86-3"/>
    <property type="nucleotide sequence ID" value="NM_001028250.5"/>
</dbReference>
<dbReference type="RefSeq" id="NP_001294353.1">
    <molecule id="U4PR86-1"/>
    <property type="nucleotide sequence ID" value="NM_001307424.3"/>
</dbReference>
<dbReference type="RefSeq" id="NP_001294354.1">
    <molecule id="U4PR86-4"/>
    <property type="nucleotide sequence ID" value="NM_001307425.1"/>
</dbReference>
<dbReference type="RefSeq" id="NP_001294355.1">
    <property type="nucleotide sequence ID" value="NM_001307426.1"/>
</dbReference>
<dbReference type="RefSeq" id="NP_001294356.1">
    <property type="nucleotide sequence ID" value="NM_001307427.1"/>
</dbReference>
<dbReference type="RefSeq" id="NP_001294357.1">
    <molecule id="U4PR86-7"/>
    <property type="nucleotide sequence ID" value="NM_001307428.3"/>
</dbReference>
<dbReference type="RefSeq" id="NP_001294358.1">
    <molecule id="U4PR86-8"/>
    <property type="nucleotide sequence ID" value="NM_001307429.3"/>
</dbReference>
<dbReference type="RefSeq" id="NP_001368238.1">
    <molecule id="U4PR86-5"/>
    <property type="nucleotide sequence ID" value="NM_001380011.1"/>
</dbReference>
<dbReference type="RefSeq" id="NP_001368239.1">
    <molecule id="U4PR86-6"/>
    <property type="nucleotide sequence ID" value="NM_001380012.1"/>
</dbReference>
<dbReference type="SMR" id="U4PR86"/>
<dbReference type="FunCoup" id="U4PR86">
    <property type="interactions" value="908"/>
</dbReference>
<dbReference type="IntAct" id="U4PR86">
    <property type="interactions" value="1"/>
</dbReference>
<dbReference type="STRING" id="6239.W03G1.6c.1"/>
<dbReference type="PaxDb" id="6239-W03G1.6c"/>
<dbReference type="PeptideAtlas" id="U4PR86"/>
<dbReference type="EnsemblMetazoa" id="W03G1.6a.1">
    <molecule id="U4PR86-2"/>
    <property type="protein sequence ID" value="W03G1.6a.1"/>
    <property type="gene ID" value="WBGene00021012"/>
</dbReference>
<dbReference type="EnsemblMetazoa" id="W03G1.6b.1">
    <molecule id="U4PR86-3"/>
    <property type="protein sequence ID" value="W03G1.6b.1"/>
    <property type="gene ID" value="WBGene00021012"/>
</dbReference>
<dbReference type="EnsemblMetazoa" id="W03G1.6c.1">
    <molecule id="U4PR86-1"/>
    <property type="protein sequence ID" value="W03G1.6c.1"/>
    <property type="gene ID" value="WBGene00021012"/>
</dbReference>
<dbReference type="EnsemblMetazoa" id="W03G1.6d.1">
    <molecule id="U4PR86-4"/>
    <property type="protein sequence ID" value="W03G1.6d.1"/>
    <property type="gene ID" value="WBGene00021012"/>
</dbReference>
<dbReference type="EnsemblMetazoa" id="W03G1.6e.1">
    <molecule id="U4PR86-5"/>
    <property type="protein sequence ID" value="W03G1.6e.1"/>
    <property type="gene ID" value="WBGene00021012"/>
</dbReference>
<dbReference type="EnsemblMetazoa" id="W03G1.6f.1">
    <molecule id="U4PR86-6"/>
    <property type="protein sequence ID" value="W03G1.6f.1"/>
    <property type="gene ID" value="WBGene00021012"/>
</dbReference>
<dbReference type="EnsemblMetazoa" id="W03G1.6g.1">
    <molecule id="U4PR86-7"/>
    <property type="protein sequence ID" value="W03G1.6g.1"/>
    <property type="gene ID" value="WBGene00021012"/>
</dbReference>
<dbReference type="EnsemblMetazoa" id="W03G1.6h.1">
    <molecule id="U4PR86-8"/>
    <property type="protein sequence ID" value="W03G1.6h.1"/>
    <property type="gene ID" value="WBGene00021012"/>
</dbReference>
<dbReference type="GeneID" id="176877"/>
<dbReference type="KEGG" id="cel:CELE_W03G1.6"/>
<dbReference type="UCSC" id="W03G1.6a">
    <property type="organism name" value="c. elegans"/>
</dbReference>
<dbReference type="AGR" id="WB:WBGene00021012"/>
<dbReference type="CTD" id="176877"/>
<dbReference type="WormBase" id="W03G1.6a">
    <molecule id="U4PR86-2"/>
    <property type="protein sequence ID" value="CE40473"/>
    <property type="gene ID" value="WBGene00021012"/>
    <property type="gene designation" value="pig-1"/>
</dbReference>
<dbReference type="WormBase" id="W03G1.6b">
    <molecule id="U4PR86-3"/>
    <property type="protein sequence ID" value="CE40474"/>
    <property type="gene ID" value="WBGene00021012"/>
    <property type="gene designation" value="pig-1"/>
</dbReference>
<dbReference type="WormBase" id="W03G1.6c">
    <molecule id="U4PR86-1"/>
    <property type="protein sequence ID" value="CE48676"/>
    <property type="gene ID" value="WBGene00021012"/>
    <property type="gene designation" value="pig-1"/>
</dbReference>
<dbReference type="WormBase" id="W03G1.6d">
    <molecule id="U4PR86-4"/>
    <property type="protein sequence ID" value="CE49097"/>
    <property type="gene ID" value="WBGene00021012"/>
    <property type="gene designation" value="pig-1"/>
</dbReference>
<dbReference type="WormBase" id="W03G1.6e">
    <molecule id="U4PR86-5"/>
    <property type="protein sequence ID" value="CE48957"/>
    <property type="gene ID" value="WBGene00021012"/>
    <property type="gene designation" value="pig-1"/>
</dbReference>
<dbReference type="WormBase" id="W03G1.6f">
    <molecule id="U4PR86-6"/>
    <property type="protein sequence ID" value="CE48801"/>
    <property type="gene ID" value="WBGene00021012"/>
    <property type="gene designation" value="pig-1"/>
</dbReference>
<dbReference type="WormBase" id="W03G1.6g">
    <molecule id="U4PR86-7"/>
    <property type="protein sequence ID" value="CE48617"/>
    <property type="gene ID" value="WBGene00021012"/>
    <property type="gene designation" value="pig-1"/>
</dbReference>
<dbReference type="WormBase" id="W03G1.6h">
    <molecule id="U4PR86-8"/>
    <property type="protein sequence ID" value="CE49061"/>
    <property type="gene ID" value="WBGene00021012"/>
    <property type="gene designation" value="pig-1"/>
</dbReference>
<dbReference type="eggNOG" id="KOG0583">
    <property type="taxonomic scope" value="Eukaryota"/>
</dbReference>
<dbReference type="GeneTree" id="ENSGT00940000154889"/>
<dbReference type="InParanoid" id="U4PR86"/>
<dbReference type="OMA" id="NVCTPKS"/>
<dbReference type="OrthoDB" id="193931at2759"/>
<dbReference type="PRO" id="PR:U4PR86"/>
<dbReference type="Proteomes" id="UP000001940">
    <property type="component" value="Chromosome IV"/>
</dbReference>
<dbReference type="Bgee" id="WBGene00021012">
    <property type="expression patterns" value="Expressed in embryo and 4 other cell types or tissues"/>
</dbReference>
<dbReference type="GO" id="GO:0005813">
    <property type="term" value="C:centrosome"/>
    <property type="evidence" value="ECO:0000314"/>
    <property type="project" value="WormBase"/>
</dbReference>
<dbReference type="GO" id="GO:0005737">
    <property type="term" value="C:cytoplasm"/>
    <property type="evidence" value="ECO:0000314"/>
    <property type="project" value="WormBase"/>
</dbReference>
<dbReference type="GO" id="GO:0005524">
    <property type="term" value="F:ATP binding"/>
    <property type="evidence" value="ECO:0007669"/>
    <property type="project" value="UniProtKB-KW"/>
</dbReference>
<dbReference type="GO" id="GO:0004715">
    <property type="term" value="F:non-membrane spanning protein tyrosine kinase activity"/>
    <property type="evidence" value="ECO:0000318"/>
    <property type="project" value="GO_Central"/>
</dbReference>
<dbReference type="GO" id="GO:0106310">
    <property type="term" value="F:protein serine kinase activity"/>
    <property type="evidence" value="ECO:0007669"/>
    <property type="project" value="RHEA"/>
</dbReference>
<dbReference type="GO" id="GO:0004674">
    <property type="term" value="F:protein serine/threonine kinase activity"/>
    <property type="evidence" value="ECO:0000315"/>
    <property type="project" value="UniProtKB"/>
</dbReference>
<dbReference type="GO" id="GO:0006915">
    <property type="term" value="P:apoptotic process"/>
    <property type="evidence" value="ECO:0007669"/>
    <property type="project" value="UniProtKB-KW"/>
</dbReference>
<dbReference type="GO" id="GO:0055059">
    <property type="term" value="P:asymmetric neuroblast division"/>
    <property type="evidence" value="ECO:0000315"/>
    <property type="project" value="UniProtKB"/>
</dbReference>
<dbReference type="GO" id="GO:0071542">
    <property type="term" value="P:dopaminergic neuron differentiation"/>
    <property type="evidence" value="ECO:0000316"/>
    <property type="project" value="UniProtKB"/>
</dbReference>
<dbReference type="GO" id="GO:0031581">
    <property type="term" value="P:hemidesmosome assembly"/>
    <property type="evidence" value="ECO:0000316"/>
    <property type="project" value="WormBase"/>
</dbReference>
<dbReference type="GO" id="GO:1904746">
    <property type="term" value="P:negative regulation of apoptotic process involved in development"/>
    <property type="evidence" value="ECO:0000316"/>
    <property type="project" value="UniProtKB"/>
</dbReference>
<dbReference type="GO" id="GO:0014019">
    <property type="term" value="P:neuroblast development"/>
    <property type="evidence" value="ECO:0000315"/>
    <property type="project" value="UniProtKB"/>
</dbReference>
<dbReference type="GO" id="GO:0043065">
    <property type="term" value="P:positive regulation of apoptotic process"/>
    <property type="evidence" value="ECO:0000315"/>
    <property type="project" value="UniProtKB"/>
</dbReference>
<dbReference type="GO" id="GO:0030155">
    <property type="term" value="P:regulation of cell adhesion"/>
    <property type="evidence" value="ECO:0000316"/>
    <property type="project" value="UniProtKB"/>
</dbReference>
<dbReference type="CDD" id="cd12198">
    <property type="entry name" value="MELK_C"/>
    <property type="match status" value="1"/>
</dbReference>
<dbReference type="CDD" id="cd14078">
    <property type="entry name" value="STKc_MELK"/>
    <property type="match status" value="1"/>
</dbReference>
<dbReference type="CDD" id="cd14341">
    <property type="entry name" value="UBA_MELK"/>
    <property type="match status" value="1"/>
</dbReference>
<dbReference type="FunFam" id="1.10.510.10:FF:000271">
    <property type="entry name" value="Non-specific serine/threonine protein kinase"/>
    <property type="match status" value="1"/>
</dbReference>
<dbReference type="FunFam" id="3.30.200.20:FF:000003">
    <property type="entry name" value="Non-specific serine/threonine protein kinase"/>
    <property type="match status" value="1"/>
</dbReference>
<dbReference type="FunFam" id="3.30.310.80:FF:000026">
    <property type="entry name" value="Non-specific serine/threonine protein kinase"/>
    <property type="match status" value="1"/>
</dbReference>
<dbReference type="Gene3D" id="3.30.310.80">
    <property type="entry name" value="Kinase associated domain 1, KA1"/>
    <property type="match status" value="1"/>
</dbReference>
<dbReference type="Gene3D" id="1.10.510.10">
    <property type="entry name" value="Transferase(Phosphotransferase) domain 1"/>
    <property type="match status" value="1"/>
</dbReference>
<dbReference type="InterPro" id="IPR028375">
    <property type="entry name" value="KA1/Ssp2_C"/>
</dbReference>
<dbReference type="InterPro" id="IPR001772">
    <property type="entry name" value="KA1_dom"/>
</dbReference>
<dbReference type="InterPro" id="IPR011009">
    <property type="entry name" value="Kinase-like_dom_sf"/>
</dbReference>
<dbReference type="InterPro" id="IPR034673">
    <property type="entry name" value="MELK"/>
</dbReference>
<dbReference type="InterPro" id="IPR000719">
    <property type="entry name" value="Prot_kinase_dom"/>
</dbReference>
<dbReference type="InterPro" id="IPR017441">
    <property type="entry name" value="Protein_kinase_ATP_BS"/>
</dbReference>
<dbReference type="InterPro" id="IPR008271">
    <property type="entry name" value="Ser/Thr_kinase_AS"/>
</dbReference>
<dbReference type="PANTHER" id="PTHR24346">
    <property type="entry name" value="MAP/MICROTUBULE AFFINITY-REGULATING KINASE"/>
    <property type="match status" value="1"/>
</dbReference>
<dbReference type="PANTHER" id="PTHR24346:SF30">
    <property type="entry name" value="MATERNAL EMBRYONIC LEUCINE ZIPPER KINASE"/>
    <property type="match status" value="1"/>
</dbReference>
<dbReference type="Pfam" id="PF02149">
    <property type="entry name" value="KA1"/>
    <property type="match status" value="1"/>
</dbReference>
<dbReference type="Pfam" id="PF00069">
    <property type="entry name" value="Pkinase"/>
    <property type="match status" value="1"/>
</dbReference>
<dbReference type="SMART" id="SM00220">
    <property type="entry name" value="S_TKc"/>
    <property type="match status" value="1"/>
</dbReference>
<dbReference type="SUPFAM" id="SSF103243">
    <property type="entry name" value="KA1-like"/>
    <property type="match status" value="1"/>
</dbReference>
<dbReference type="SUPFAM" id="SSF56112">
    <property type="entry name" value="Protein kinase-like (PK-like)"/>
    <property type="match status" value="1"/>
</dbReference>
<dbReference type="PROSITE" id="PS50032">
    <property type="entry name" value="KA1"/>
    <property type="match status" value="1"/>
</dbReference>
<dbReference type="PROSITE" id="PS00107">
    <property type="entry name" value="PROTEIN_KINASE_ATP"/>
    <property type="match status" value="1"/>
</dbReference>
<dbReference type="PROSITE" id="PS50011">
    <property type="entry name" value="PROTEIN_KINASE_DOM"/>
    <property type="match status" value="1"/>
</dbReference>
<dbReference type="PROSITE" id="PS00108">
    <property type="entry name" value="PROTEIN_KINASE_ST"/>
    <property type="match status" value="1"/>
</dbReference>
<organism evidence="13">
    <name type="scientific">Caenorhabditis elegans</name>
    <dbReference type="NCBI Taxonomy" id="6239"/>
    <lineage>
        <taxon>Eukaryota</taxon>
        <taxon>Metazoa</taxon>
        <taxon>Ecdysozoa</taxon>
        <taxon>Nematoda</taxon>
        <taxon>Chromadorea</taxon>
        <taxon>Rhabditida</taxon>
        <taxon>Rhabditina</taxon>
        <taxon>Rhabditomorpha</taxon>
        <taxon>Rhabditoidea</taxon>
        <taxon>Rhabditidae</taxon>
        <taxon>Peloderinae</taxon>
        <taxon>Caenorhabditis</taxon>
    </lineage>
</organism>
<comment type="function">
    <text evidence="5 6 7 8 9 10 11">Serine/threonine-protein kinase involved in cell autonomous neuroblast asymmetric divisions that generate one precursor cell and one apoptotic cell by controlling spindle positioning, myosin distribution and the segregation of cell fate determinants (PubMed:16774992, PubMed:20929735, PubMed:23267054, PubMed:23851392, PubMed:23946438, PubMed:28659600). Plays a role in neural fate specification in several dopaminergic linages, acting in concert with ham-1 (PubMed:28659600). Involved in phosphorylation of multiple proteins associated with key developmental processes, including the cell cycle, apoptosis, endocytosis, and asymmetric cell division (PubMed:28659600). Promotes cell shedding during embryogenesis, probably through the endocytosis-mediated removal of cell adhesion molecules such as hmp-1 from the cell surface (PubMed:22801495). May act downstream of par-4/strd-1/mop-25 to regulate cell shedding (PubMed:22801495).</text>
</comment>
<comment type="catalytic activity">
    <reaction evidence="1">
        <text>L-seryl-[protein] + ATP = O-phospho-L-seryl-[protein] + ADP + H(+)</text>
        <dbReference type="Rhea" id="RHEA:17989"/>
        <dbReference type="Rhea" id="RHEA-COMP:9863"/>
        <dbReference type="Rhea" id="RHEA-COMP:11604"/>
        <dbReference type="ChEBI" id="CHEBI:15378"/>
        <dbReference type="ChEBI" id="CHEBI:29999"/>
        <dbReference type="ChEBI" id="CHEBI:30616"/>
        <dbReference type="ChEBI" id="CHEBI:83421"/>
        <dbReference type="ChEBI" id="CHEBI:456216"/>
        <dbReference type="EC" id="2.7.11.1"/>
    </reaction>
</comment>
<comment type="catalytic activity">
    <reaction evidence="1">
        <text>L-threonyl-[protein] + ATP = O-phospho-L-threonyl-[protein] + ADP + H(+)</text>
        <dbReference type="Rhea" id="RHEA:46608"/>
        <dbReference type="Rhea" id="RHEA-COMP:11060"/>
        <dbReference type="Rhea" id="RHEA-COMP:11605"/>
        <dbReference type="ChEBI" id="CHEBI:15378"/>
        <dbReference type="ChEBI" id="CHEBI:30013"/>
        <dbReference type="ChEBI" id="CHEBI:30616"/>
        <dbReference type="ChEBI" id="CHEBI:61977"/>
        <dbReference type="ChEBI" id="CHEBI:456216"/>
        <dbReference type="EC" id="2.7.11.1"/>
    </reaction>
</comment>
<comment type="subcellular location">
    <subcellularLocation>
        <location evidence="5">Cytoplasm</location>
    </subcellularLocation>
    <subcellularLocation>
        <location evidence="8">Cytoplasm</location>
        <location evidence="8">Cytoskeleton</location>
        <location evidence="8">Microtubule organizing center</location>
        <location evidence="8">Centrosome</location>
    </subcellularLocation>
    <text evidence="8">Cytoplasmic in undividing cells and co-localizes with centrosome in dividing cells.</text>
</comment>
<comment type="alternative products">
    <event type="alternative splicing"/>
    <isoform>
        <id>U4PR86-1</id>
        <name evidence="16">c</name>
        <sequence type="displayed"/>
    </isoform>
    <isoform>
        <id>U4PR86-2</id>
        <name evidence="14">a</name>
        <sequence type="described" ref="VSP_057507"/>
    </isoform>
    <isoform>
        <id>U4PR86-3</id>
        <name evidence="15">b</name>
        <sequence type="described" ref="VSP_057507 VSP_057508"/>
    </isoform>
    <isoform>
        <id>U4PR86-4</id>
        <name evidence="17">d</name>
        <sequence type="described" ref="VSP_057508"/>
    </isoform>
    <isoform>
        <id>U4PR86-5</id>
        <name evidence="18">e</name>
        <sequence type="described" ref="VSP_057506 VSP_057507"/>
    </isoform>
    <isoform>
        <id>U4PR86-6</id>
        <name evidence="19">f</name>
        <sequence type="described" ref="VSP_057506 VSP_057507 VSP_057508"/>
    </isoform>
    <isoform>
        <id>U4PR86-7</id>
        <name evidence="20">g</name>
        <sequence type="described" ref="VSP_057506"/>
    </isoform>
    <isoform>
        <id>U4PR86-8</id>
        <name evidence="21">h</name>
        <sequence type="described" ref="VSP_057506 VSP_057508"/>
    </isoform>
</comment>
<comment type="developmental stage">
    <text evidence="5">Ubiquitously expressed in early embryo with a more restricted expression in later embryonic stages and in young larvae. Expressed in dividing cells including ventral nerve cord neuroblasts, vulval precursors, hypodermal seam cells and in the Q lineage. No expression in adults.</text>
</comment>
<comment type="domain">
    <text evidence="8">The KA1 domain is required for the control of asymmetric neuroblast division.</text>
</comment>
<comment type="PTM">
    <text evidence="7 8">May be phosphorylated at Thr-169 by par-4 and/or autophosphorylated which likely results in its activation (PubMed:22801495). Phosphorylation is not required for co-localization with the centrosome (PubMed:23267054).</text>
</comment>
<comment type="disruption phenotype">
    <text evidence="5 6 7 11">During neuroblast differentiation, mutants produce an additional precursor cell for the HSN/PHB, I2, M4 and PLM/ALN and Q.a and Q.p lineages. The nucleus size of the 2 Q.p daughter cells is similar (PubMed:16774992). Symmetrical distribution of myosin II during QR.a cell division (PubMed:20929735). Abnormally high number of ADE neurons (PubMed:28659600). Double knockouts of pig-1 and ced-3 have impaired cell shedding during embryogenesis which results in the generation of an ectopic excretory cell and an ERM-like neuron. In addition, mutants show a delay in clearance after engulfment of cell corpses which is associated with the abnormal expression of cell adhesion molecules (PubMed:22801495).</text>
</comment>
<comment type="similarity">
    <text evidence="12">Belongs to the protein kinase superfamily. CAMK Ser/Thr protein kinase family. SNF1 subfamily.</text>
</comment>
<feature type="chain" id="PRO_0000432387" description="Maternal embryonic leucine zipper kinase">
    <location>
        <begin position="1"/>
        <end position="706"/>
    </location>
</feature>
<feature type="domain" description="Protein kinase" evidence="2">
    <location>
        <begin position="11"/>
        <end position="265"/>
    </location>
</feature>
<feature type="domain" description="KA1" evidence="3">
    <location>
        <begin position="656"/>
        <end position="705"/>
    </location>
</feature>
<feature type="region of interest" description="Disordered" evidence="4">
    <location>
        <begin position="366"/>
        <end position="386"/>
    </location>
</feature>
<feature type="region of interest" description="Disordered" evidence="4">
    <location>
        <begin position="433"/>
        <end position="493"/>
    </location>
</feature>
<feature type="region of interest" description="Disordered" evidence="4">
    <location>
        <begin position="506"/>
        <end position="555"/>
    </location>
</feature>
<feature type="compositionally biased region" description="Polar residues" evidence="4">
    <location>
        <begin position="447"/>
        <end position="461"/>
    </location>
</feature>
<feature type="compositionally biased region" description="Polar residues" evidence="4">
    <location>
        <begin position="506"/>
        <end position="515"/>
    </location>
</feature>
<feature type="active site" description="Proton acceptor" evidence="2">
    <location>
        <position position="132"/>
    </location>
</feature>
<feature type="binding site" evidence="2">
    <location>
        <begin position="17"/>
        <end position="25"/>
    </location>
    <ligand>
        <name>ATP</name>
        <dbReference type="ChEBI" id="CHEBI:30616"/>
    </ligand>
</feature>
<feature type="binding site" evidence="2">
    <location>
        <position position="40"/>
    </location>
    <ligand>
        <name>ATP</name>
        <dbReference type="ChEBI" id="CHEBI:30616"/>
    </ligand>
</feature>
<feature type="splice variant" id="VSP_057506" description="In isoform e, isoform f, isoform g and isoform h." evidence="12">
    <location>
        <begin position="1"/>
        <end position="244"/>
    </location>
</feature>
<feature type="splice variant" id="VSP_057507" description="In isoform a, isoform b, isoform e and isoform f." evidence="12">
    <location>
        <begin position="561"/>
        <end position="563"/>
    </location>
</feature>
<feature type="splice variant" id="VSP_057508" description="In isoform b, isoform d, isoform f and isoform h." evidence="12">
    <original>GIRRKRLKGDAFMYKKVCEKILQMAKIE</original>
    <variation>RNLRRFFCCVNINIPSRKPTYIEL</variation>
    <location>
        <begin position="679"/>
        <end position="706"/>
    </location>
</feature>
<feature type="mutagenesis site" description="May be inactive. Prevents cell shedding during embryogenesis. Additional production of PVM neuron." evidence="7 8">
    <original>T</original>
    <variation>A</variation>
    <location>
        <position position="169"/>
    </location>
</feature>
<feature type="mutagenesis site" description="May be constitutively active. Promotes cell shedding during embryogenesis. In some mutants, production of an additional PVM neuron." evidence="7 8">
    <original>T</original>
    <variation>D</variation>
    <location>
        <position position="169"/>
    </location>
</feature>
<feature type="mutagenesis site" description="In n4780; production of an additional M4 motor neuron." evidence="9">
    <original>G</original>
    <variation>E</variation>
    <location>
        <position position="172"/>
    </location>
</feature>
<feature type="mutagenesis site" description="In gm300; production of an additional HSN/PHB precursor cell." evidence="5">
    <original>G</original>
    <variation>R</variation>
    <location>
        <position position="172"/>
    </location>
</feature>
<feature type="mutagenesis site" description="In gm301; production of an additional HSN/PHB precursor cell and an additional PVM precursor cell." evidence="5 8">
    <original>G</original>
    <variation>D</variation>
    <location>
        <position position="198"/>
    </location>
</feature>
<accession>U4PR86</accession>
<accession>A7WK47</accession>
<accession>A7WK48</accession>
<accession>U4PB44</accession>
<accession>U4PBH9</accession>
<accession>U4PED2</accession>
<accession>U4PLZ7</accession>
<accession>U4PR90</accession>
<sequence length="706" mass="80340">MSKYEVLQGFYAVHDELGSGGFGKVRLATHLLTNQKVAIKIIDKKQLGHDLPRVQTEMDALRNLSHQNICRLYHYIETEDKFFIVMEYCSGGEMFDYIVRKERLEESEARHFFRQLVSAIAFVHSQGYAHRDLKPENLLLTEDLHLKLIDFGLCAKTEKGRIDKHNLDTCCGSPAYAAPELIQGLQYKGNEADVWSMGILLYTLLVGALPFEDDNMQIMYKKIQSGCFYEPEFLSPLSKQLLRAMLQVVPERRISVKKLLEHDWLNHKYTQPVKWNTIYDKNFIDRDVARVMSKYYGFESTDKMIEKIKEWNFDYMTSTYYALLHRKRNGMEIILPMVRNSTNTAPPNVQNILCSPTIHASLENNLDKSGLEDDDSDPSSISSSSDISARLKKNCVVSDESSSSRFVKPMSPAAEKDKKMSYVNAMLTMPSQFTGRSPLRIPESPMSVRSSDSASLGSAATPSRGGVKDNDKENASTGKNYRMGASTCKSRGPLKITGVEEGTMKSVYTTPNTRPTLRGLFSPGNAEHKKRQRARSSDRASIGMPPGSPVSIGSAHSANNELLADGRTPRSRIKTNRLPQRVFTSLERKKEKLITLLTPRKMQRDSPQVLKDVKNMVNVSMTASQDPEEVRNLLKKVFDDERMRYELNGWKFLATQETVHGWMTVELEIVRLQMFDKVGIRRKRLKGDAFMYKKVCEKILQMAKIE</sequence>